<gene>
    <name evidence="1" type="primary">leuS</name>
    <name type="ordered locus">Msil_0336</name>
</gene>
<keyword id="KW-0030">Aminoacyl-tRNA synthetase</keyword>
<keyword id="KW-0067">ATP-binding</keyword>
<keyword id="KW-0963">Cytoplasm</keyword>
<keyword id="KW-0436">Ligase</keyword>
<keyword id="KW-0547">Nucleotide-binding</keyword>
<keyword id="KW-0648">Protein biosynthesis</keyword>
<keyword id="KW-1185">Reference proteome</keyword>
<proteinExistence type="inferred from homology"/>
<name>SYL_METSB</name>
<comment type="catalytic activity">
    <reaction evidence="1">
        <text>tRNA(Leu) + L-leucine + ATP = L-leucyl-tRNA(Leu) + AMP + diphosphate</text>
        <dbReference type="Rhea" id="RHEA:11688"/>
        <dbReference type="Rhea" id="RHEA-COMP:9613"/>
        <dbReference type="Rhea" id="RHEA-COMP:9622"/>
        <dbReference type="ChEBI" id="CHEBI:30616"/>
        <dbReference type="ChEBI" id="CHEBI:33019"/>
        <dbReference type="ChEBI" id="CHEBI:57427"/>
        <dbReference type="ChEBI" id="CHEBI:78442"/>
        <dbReference type="ChEBI" id="CHEBI:78494"/>
        <dbReference type="ChEBI" id="CHEBI:456215"/>
        <dbReference type="EC" id="6.1.1.4"/>
    </reaction>
</comment>
<comment type="subcellular location">
    <subcellularLocation>
        <location evidence="1">Cytoplasm</location>
    </subcellularLocation>
</comment>
<comment type="similarity">
    <text evidence="1">Belongs to the class-I aminoacyl-tRNA synthetase family.</text>
</comment>
<dbReference type="EC" id="6.1.1.4" evidence="1"/>
<dbReference type="EMBL" id="CP001280">
    <property type="protein sequence ID" value="ACK49315.1"/>
    <property type="molecule type" value="Genomic_DNA"/>
</dbReference>
<dbReference type="RefSeq" id="WP_012589385.1">
    <property type="nucleotide sequence ID" value="NC_011666.1"/>
</dbReference>
<dbReference type="SMR" id="B8EQP4"/>
<dbReference type="STRING" id="395965.Msil_0336"/>
<dbReference type="KEGG" id="msl:Msil_0336"/>
<dbReference type="eggNOG" id="COG0495">
    <property type="taxonomic scope" value="Bacteria"/>
</dbReference>
<dbReference type="HOGENOM" id="CLU_004427_0_0_5"/>
<dbReference type="OrthoDB" id="9810365at2"/>
<dbReference type="Proteomes" id="UP000002257">
    <property type="component" value="Chromosome"/>
</dbReference>
<dbReference type="GO" id="GO:0005829">
    <property type="term" value="C:cytosol"/>
    <property type="evidence" value="ECO:0007669"/>
    <property type="project" value="TreeGrafter"/>
</dbReference>
<dbReference type="GO" id="GO:0002161">
    <property type="term" value="F:aminoacyl-tRNA deacylase activity"/>
    <property type="evidence" value="ECO:0007669"/>
    <property type="project" value="InterPro"/>
</dbReference>
<dbReference type="GO" id="GO:0005524">
    <property type="term" value="F:ATP binding"/>
    <property type="evidence" value="ECO:0007669"/>
    <property type="project" value="UniProtKB-UniRule"/>
</dbReference>
<dbReference type="GO" id="GO:0004823">
    <property type="term" value="F:leucine-tRNA ligase activity"/>
    <property type="evidence" value="ECO:0007669"/>
    <property type="project" value="UniProtKB-UniRule"/>
</dbReference>
<dbReference type="GO" id="GO:0006429">
    <property type="term" value="P:leucyl-tRNA aminoacylation"/>
    <property type="evidence" value="ECO:0007669"/>
    <property type="project" value="UniProtKB-UniRule"/>
</dbReference>
<dbReference type="CDD" id="cd07958">
    <property type="entry name" value="Anticodon_Ia_Leu_BEm"/>
    <property type="match status" value="1"/>
</dbReference>
<dbReference type="CDD" id="cd00812">
    <property type="entry name" value="LeuRS_core"/>
    <property type="match status" value="1"/>
</dbReference>
<dbReference type="FunFam" id="1.10.730.10:FF:000002">
    <property type="entry name" value="Leucine--tRNA ligase"/>
    <property type="match status" value="1"/>
</dbReference>
<dbReference type="FunFam" id="3.40.50.620:FF:000003">
    <property type="entry name" value="Leucine--tRNA ligase"/>
    <property type="match status" value="1"/>
</dbReference>
<dbReference type="Gene3D" id="2.20.28.290">
    <property type="match status" value="1"/>
</dbReference>
<dbReference type="Gene3D" id="3.10.20.590">
    <property type="match status" value="1"/>
</dbReference>
<dbReference type="Gene3D" id="3.40.50.620">
    <property type="entry name" value="HUPs"/>
    <property type="match status" value="2"/>
</dbReference>
<dbReference type="Gene3D" id="1.10.730.10">
    <property type="entry name" value="Isoleucyl-tRNA Synthetase, Domain 1"/>
    <property type="match status" value="2"/>
</dbReference>
<dbReference type="Gene3D" id="3.90.740.10">
    <property type="entry name" value="Valyl/Leucyl/Isoleucyl-tRNA synthetase, editing domain"/>
    <property type="match status" value="1"/>
</dbReference>
<dbReference type="HAMAP" id="MF_00049_B">
    <property type="entry name" value="Leu_tRNA_synth_B"/>
    <property type="match status" value="1"/>
</dbReference>
<dbReference type="InterPro" id="IPR001412">
    <property type="entry name" value="aa-tRNA-synth_I_CS"/>
</dbReference>
<dbReference type="InterPro" id="IPR002300">
    <property type="entry name" value="aa-tRNA-synth_Ia"/>
</dbReference>
<dbReference type="InterPro" id="IPR002302">
    <property type="entry name" value="Leu-tRNA-ligase"/>
</dbReference>
<dbReference type="InterPro" id="IPR025709">
    <property type="entry name" value="Leu_tRNA-synth_edit"/>
</dbReference>
<dbReference type="InterPro" id="IPR013155">
    <property type="entry name" value="M/V/L/I-tRNA-synth_anticd-bd"/>
</dbReference>
<dbReference type="InterPro" id="IPR015413">
    <property type="entry name" value="Methionyl/Leucyl_tRNA_Synth"/>
</dbReference>
<dbReference type="InterPro" id="IPR014729">
    <property type="entry name" value="Rossmann-like_a/b/a_fold"/>
</dbReference>
<dbReference type="InterPro" id="IPR009080">
    <property type="entry name" value="tRNAsynth_Ia_anticodon-bd"/>
</dbReference>
<dbReference type="InterPro" id="IPR009008">
    <property type="entry name" value="Val/Leu/Ile-tRNA-synth_edit"/>
</dbReference>
<dbReference type="NCBIfam" id="TIGR00396">
    <property type="entry name" value="leuS_bact"/>
    <property type="match status" value="1"/>
</dbReference>
<dbReference type="PANTHER" id="PTHR43740:SF2">
    <property type="entry name" value="LEUCINE--TRNA LIGASE, MITOCHONDRIAL"/>
    <property type="match status" value="1"/>
</dbReference>
<dbReference type="PANTHER" id="PTHR43740">
    <property type="entry name" value="LEUCYL-TRNA SYNTHETASE"/>
    <property type="match status" value="1"/>
</dbReference>
<dbReference type="Pfam" id="PF08264">
    <property type="entry name" value="Anticodon_1"/>
    <property type="match status" value="1"/>
</dbReference>
<dbReference type="Pfam" id="PF00133">
    <property type="entry name" value="tRNA-synt_1"/>
    <property type="match status" value="2"/>
</dbReference>
<dbReference type="Pfam" id="PF13603">
    <property type="entry name" value="tRNA-synt_1_2"/>
    <property type="match status" value="1"/>
</dbReference>
<dbReference type="Pfam" id="PF09334">
    <property type="entry name" value="tRNA-synt_1g"/>
    <property type="match status" value="1"/>
</dbReference>
<dbReference type="PRINTS" id="PR00985">
    <property type="entry name" value="TRNASYNTHLEU"/>
</dbReference>
<dbReference type="SUPFAM" id="SSF47323">
    <property type="entry name" value="Anticodon-binding domain of a subclass of class I aminoacyl-tRNA synthetases"/>
    <property type="match status" value="1"/>
</dbReference>
<dbReference type="SUPFAM" id="SSF52374">
    <property type="entry name" value="Nucleotidylyl transferase"/>
    <property type="match status" value="1"/>
</dbReference>
<dbReference type="SUPFAM" id="SSF50677">
    <property type="entry name" value="ValRS/IleRS/LeuRS editing domain"/>
    <property type="match status" value="1"/>
</dbReference>
<dbReference type="PROSITE" id="PS00178">
    <property type="entry name" value="AA_TRNA_LIGASE_I"/>
    <property type="match status" value="1"/>
</dbReference>
<feature type="chain" id="PRO_1000199214" description="Leucine--tRNA ligase">
    <location>
        <begin position="1"/>
        <end position="876"/>
    </location>
</feature>
<feature type="short sequence motif" description="'HIGH' region">
    <location>
        <begin position="43"/>
        <end position="53"/>
    </location>
</feature>
<feature type="short sequence motif" description="'KMSKS' region">
    <location>
        <begin position="630"/>
        <end position="634"/>
    </location>
</feature>
<feature type="binding site" evidence="1">
    <location>
        <position position="633"/>
    </location>
    <ligand>
        <name>ATP</name>
        <dbReference type="ChEBI" id="CHEBI:30616"/>
    </ligand>
</feature>
<protein>
    <recommendedName>
        <fullName evidence="1">Leucine--tRNA ligase</fullName>
        <ecNumber evidence="1">6.1.1.4</ecNumber>
    </recommendedName>
    <alternativeName>
        <fullName evidence="1">Leucyl-tRNA synthetase</fullName>
        <shortName evidence="1">LeuRS</shortName>
    </alternativeName>
</protein>
<sequence length="876" mass="97986">MDFERYNARETEPKWRDKWERSATFKTDNDDPRPKYYVLEMFPYPSGRIHMGHVRNYTMGDVIARYKRARGFSVLHPMGWDAFGMPAENAAMQNKSHPAAWTYANIEAMRAQLKSMGLSLDWSREIATCDPAYYRHQQKMFLDFLAAGLVDRKKSKVNWDPVDHTVLANEQVIDGRGWRSGALVEQRELTQWFFKITDYAEDLLRSLDGLTRWPEKVRLMQANWIGRSEGLLVRFALEPTLSAPATEIEVYTTRPDTLFGAKFLAIAADHPIAADCAKADPALAAFIAECRLRGTSVAAIETAEKKGVDTGLRVRHPFDENWLLPVYVANFVLMDYGTGAIFGCPAHDQRDLDFANAYGLGATPVILPPDADPKTFVIADKAYDGDGLLFHSRFLDGMTVEAAQEEVARRLEEHPLGNRPQAKRQVNFRLRDWGISRQRYWGCPIPIIHCPEHGAVPVPAKDLPVELPPDVSFDEPGNPLDRHPTWKHVNCPICAAPSLRETDTMDTFVDSSWYFARFTQPWMEDAPTDPSAIAKWLPVDQYIGGVEHAILHLLYARFFTRAMQATGHAGEIREPFAGLFTQGMVVHETYRSEAGDWMFPADVRIEIGPAGRRAFDLASGAEVSIGGIEKMSKSKRNTVDPDEIIGTFGADTARWFVLSDSPPERDVIWTEEGVQGAAKFVQRLWRLIGELIFLSGADGAPKPQSISPQAAAIRRAAHQSLIRLEEDLDRLRFNRAVAQAHDLANKLGAAVGDIDSVEIAPDLRFAFREAAEILTLMIAPMMPHLAEECWARLGHKGLAAEAPWPQADHSLVVEETIDLPVQVNGKKRGDLIIDRAAGREAIEAAALALEPVKRALEGRPVKKIIIVPQRIVNVVA</sequence>
<evidence type="ECO:0000255" key="1">
    <source>
        <dbReference type="HAMAP-Rule" id="MF_00049"/>
    </source>
</evidence>
<accession>B8EQP4</accession>
<organism>
    <name type="scientific">Methylocella silvestris (strain DSM 15510 / CIP 108128 / LMG 27833 / NCIMB 13906 / BL2)</name>
    <dbReference type="NCBI Taxonomy" id="395965"/>
    <lineage>
        <taxon>Bacteria</taxon>
        <taxon>Pseudomonadati</taxon>
        <taxon>Pseudomonadota</taxon>
        <taxon>Alphaproteobacteria</taxon>
        <taxon>Hyphomicrobiales</taxon>
        <taxon>Beijerinckiaceae</taxon>
        <taxon>Methylocella</taxon>
    </lineage>
</organism>
<reference key="1">
    <citation type="journal article" date="2010" name="J. Bacteriol.">
        <title>Complete genome sequence of the aerobic facultative methanotroph Methylocella silvestris BL2.</title>
        <authorList>
            <person name="Chen Y."/>
            <person name="Crombie A."/>
            <person name="Rahman M.T."/>
            <person name="Dedysh S.N."/>
            <person name="Liesack W."/>
            <person name="Stott M.B."/>
            <person name="Alam M."/>
            <person name="Theisen A.R."/>
            <person name="Murrell J.C."/>
            <person name="Dunfield P.F."/>
        </authorList>
    </citation>
    <scope>NUCLEOTIDE SEQUENCE [LARGE SCALE GENOMIC DNA]</scope>
    <source>
        <strain>DSM 15510 / CIP 108128 / LMG 27833 / NCIMB 13906 / BL2</strain>
    </source>
</reference>